<comment type="function">
    <text evidence="1">Catalyzes the last two sequential reactions in the de novo biosynthetic pathway for UDP-N-acetylglucosamine (UDP-GlcNAc). The C-terminal domain catalyzes the transfer of acetyl group from acetyl coenzyme A to glucosamine-1-phosphate (GlcN-1-P) to produce N-acetylglucosamine-1-phosphate (GlcNAc-1-P), which is converted into UDP-GlcNAc by the transfer of uridine 5-monophosphate (from uridine 5-triphosphate), a reaction catalyzed by the N-terminal domain.</text>
</comment>
<comment type="catalytic activity">
    <reaction evidence="1">
        <text>alpha-D-glucosamine 1-phosphate + acetyl-CoA = N-acetyl-alpha-D-glucosamine 1-phosphate + CoA + H(+)</text>
        <dbReference type="Rhea" id="RHEA:13725"/>
        <dbReference type="ChEBI" id="CHEBI:15378"/>
        <dbReference type="ChEBI" id="CHEBI:57287"/>
        <dbReference type="ChEBI" id="CHEBI:57288"/>
        <dbReference type="ChEBI" id="CHEBI:57776"/>
        <dbReference type="ChEBI" id="CHEBI:58516"/>
        <dbReference type="EC" id="2.3.1.157"/>
    </reaction>
</comment>
<comment type="catalytic activity">
    <reaction evidence="1">
        <text>N-acetyl-alpha-D-glucosamine 1-phosphate + UTP + H(+) = UDP-N-acetyl-alpha-D-glucosamine + diphosphate</text>
        <dbReference type="Rhea" id="RHEA:13509"/>
        <dbReference type="ChEBI" id="CHEBI:15378"/>
        <dbReference type="ChEBI" id="CHEBI:33019"/>
        <dbReference type="ChEBI" id="CHEBI:46398"/>
        <dbReference type="ChEBI" id="CHEBI:57705"/>
        <dbReference type="ChEBI" id="CHEBI:57776"/>
        <dbReference type="EC" id="2.7.7.23"/>
    </reaction>
</comment>
<comment type="cofactor">
    <cofactor evidence="1">
        <name>Mg(2+)</name>
        <dbReference type="ChEBI" id="CHEBI:18420"/>
    </cofactor>
    <text evidence="1">Binds 1 Mg(2+) ion per subunit.</text>
</comment>
<comment type="pathway">
    <text evidence="1">Nucleotide-sugar biosynthesis; UDP-N-acetyl-alpha-D-glucosamine biosynthesis; N-acetyl-alpha-D-glucosamine 1-phosphate from alpha-D-glucosamine 6-phosphate (route II): step 2/2.</text>
</comment>
<comment type="pathway">
    <text evidence="1">Nucleotide-sugar biosynthesis; UDP-N-acetyl-alpha-D-glucosamine biosynthesis; UDP-N-acetyl-alpha-D-glucosamine from N-acetyl-alpha-D-glucosamine 1-phosphate: step 1/1.</text>
</comment>
<comment type="pathway">
    <text evidence="1">Bacterial outer membrane biogenesis; LPS lipid A biosynthesis.</text>
</comment>
<comment type="subunit">
    <text evidence="1">Homotrimer.</text>
</comment>
<comment type="subcellular location">
    <subcellularLocation>
        <location evidence="1">Cytoplasm</location>
    </subcellularLocation>
</comment>
<comment type="similarity">
    <text evidence="1">In the N-terminal section; belongs to the N-acetylglucosamine-1-phosphate uridyltransferase family.</text>
</comment>
<comment type="similarity">
    <text evidence="1">In the C-terminal section; belongs to the transferase hexapeptide repeat family.</text>
</comment>
<comment type="sequence caution" evidence="2">
    <conflict type="erroneous initiation">
        <sequence resource="EMBL-CDS" id="BAC07945"/>
    </conflict>
</comment>
<dbReference type="EC" id="2.7.7.23" evidence="1"/>
<dbReference type="EC" id="2.3.1.157" evidence="1"/>
<dbReference type="EMBL" id="BA000039">
    <property type="protein sequence ID" value="BAC07945.1"/>
    <property type="status" value="ALT_INIT"/>
    <property type="molecule type" value="Genomic_DNA"/>
</dbReference>
<dbReference type="RefSeq" id="NP_681183.1">
    <property type="nucleotide sequence ID" value="NC_004113.1"/>
</dbReference>
<dbReference type="RefSeq" id="WP_164920683.1">
    <property type="nucleotide sequence ID" value="NC_004113.1"/>
</dbReference>
<dbReference type="SMR" id="Q8DLT5"/>
<dbReference type="STRING" id="197221.gene:10746981"/>
<dbReference type="EnsemblBacteria" id="BAC07945">
    <property type="protein sequence ID" value="BAC07945"/>
    <property type="gene ID" value="BAC07945"/>
</dbReference>
<dbReference type="KEGG" id="tel:tlr0393"/>
<dbReference type="PATRIC" id="fig|197221.4.peg.415"/>
<dbReference type="eggNOG" id="COG1207">
    <property type="taxonomic scope" value="Bacteria"/>
</dbReference>
<dbReference type="UniPathway" id="UPA00113">
    <property type="reaction ID" value="UER00532"/>
</dbReference>
<dbReference type="UniPathway" id="UPA00113">
    <property type="reaction ID" value="UER00533"/>
</dbReference>
<dbReference type="UniPathway" id="UPA00973"/>
<dbReference type="Proteomes" id="UP000000440">
    <property type="component" value="Chromosome"/>
</dbReference>
<dbReference type="GO" id="GO:0031470">
    <property type="term" value="C:carboxysome"/>
    <property type="evidence" value="ECO:0007669"/>
    <property type="project" value="UniProtKB-ARBA"/>
</dbReference>
<dbReference type="GO" id="GO:0005737">
    <property type="term" value="C:cytoplasm"/>
    <property type="evidence" value="ECO:0007669"/>
    <property type="project" value="UniProtKB-SubCell"/>
</dbReference>
<dbReference type="GO" id="GO:0016020">
    <property type="term" value="C:membrane"/>
    <property type="evidence" value="ECO:0007669"/>
    <property type="project" value="GOC"/>
</dbReference>
<dbReference type="GO" id="GO:0019134">
    <property type="term" value="F:glucosamine-1-phosphate N-acetyltransferase activity"/>
    <property type="evidence" value="ECO:0007669"/>
    <property type="project" value="UniProtKB-UniRule"/>
</dbReference>
<dbReference type="GO" id="GO:0000287">
    <property type="term" value="F:magnesium ion binding"/>
    <property type="evidence" value="ECO:0007669"/>
    <property type="project" value="UniProtKB-UniRule"/>
</dbReference>
<dbReference type="GO" id="GO:0043886">
    <property type="term" value="F:structural constituent of carboxysome shell"/>
    <property type="evidence" value="ECO:0007669"/>
    <property type="project" value="UniProtKB-ARBA"/>
</dbReference>
<dbReference type="GO" id="GO:0003977">
    <property type="term" value="F:UDP-N-acetylglucosamine diphosphorylase activity"/>
    <property type="evidence" value="ECO:0007669"/>
    <property type="project" value="UniProtKB-UniRule"/>
</dbReference>
<dbReference type="GO" id="GO:0000902">
    <property type="term" value="P:cell morphogenesis"/>
    <property type="evidence" value="ECO:0007669"/>
    <property type="project" value="UniProtKB-UniRule"/>
</dbReference>
<dbReference type="GO" id="GO:0071555">
    <property type="term" value="P:cell wall organization"/>
    <property type="evidence" value="ECO:0007669"/>
    <property type="project" value="UniProtKB-KW"/>
</dbReference>
<dbReference type="GO" id="GO:0009245">
    <property type="term" value="P:lipid A biosynthetic process"/>
    <property type="evidence" value="ECO:0007669"/>
    <property type="project" value="UniProtKB-UniRule"/>
</dbReference>
<dbReference type="GO" id="GO:0009252">
    <property type="term" value="P:peptidoglycan biosynthetic process"/>
    <property type="evidence" value="ECO:0007669"/>
    <property type="project" value="UniProtKB-UniRule"/>
</dbReference>
<dbReference type="GO" id="GO:0008360">
    <property type="term" value="P:regulation of cell shape"/>
    <property type="evidence" value="ECO:0007669"/>
    <property type="project" value="UniProtKB-KW"/>
</dbReference>
<dbReference type="GO" id="GO:0006048">
    <property type="term" value="P:UDP-N-acetylglucosamine biosynthetic process"/>
    <property type="evidence" value="ECO:0007669"/>
    <property type="project" value="UniProtKB-UniPathway"/>
</dbReference>
<dbReference type="CDD" id="cd02540">
    <property type="entry name" value="GT2_GlmU_N_bac"/>
    <property type="match status" value="1"/>
</dbReference>
<dbReference type="CDD" id="cd03353">
    <property type="entry name" value="LbH_GlmU_C"/>
    <property type="match status" value="1"/>
</dbReference>
<dbReference type="Gene3D" id="2.160.10.10">
    <property type="entry name" value="Hexapeptide repeat proteins"/>
    <property type="match status" value="1"/>
</dbReference>
<dbReference type="Gene3D" id="3.90.550.10">
    <property type="entry name" value="Spore Coat Polysaccharide Biosynthesis Protein SpsA, Chain A"/>
    <property type="match status" value="1"/>
</dbReference>
<dbReference type="HAMAP" id="MF_01631">
    <property type="entry name" value="GlmU"/>
    <property type="match status" value="1"/>
</dbReference>
<dbReference type="InterPro" id="IPR005882">
    <property type="entry name" value="Bifunctional_GlmU"/>
</dbReference>
<dbReference type="InterPro" id="IPR050065">
    <property type="entry name" value="GlmU-like"/>
</dbReference>
<dbReference type="InterPro" id="IPR038009">
    <property type="entry name" value="GlmU_C_LbH"/>
</dbReference>
<dbReference type="InterPro" id="IPR001451">
    <property type="entry name" value="Hexapep"/>
</dbReference>
<dbReference type="InterPro" id="IPR025877">
    <property type="entry name" value="MobA-like_NTP_Trfase"/>
</dbReference>
<dbReference type="InterPro" id="IPR029044">
    <property type="entry name" value="Nucleotide-diphossugar_trans"/>
</dbReference>
<dbReference type="InterPro" id="IPR011004">
    <property type="entry name" value="Trimer_LpxA-like_sf"/>
</dbReference>
<dbReference type="NCBIfam" id="TIGR01173">
    <property type="entry name" value="glmU"/>
    <property type="match status" value="1"/>
</dbReference>
<dbReference type="NCBIfam" id="NF010940">
    <property type="entry name" value="PRK14360.1"/>
    <property type="match status" value="1"/>
</dbReference>
<dbReference type="PANTHER" id="PTHR43584:SF3">
    <property type="entry name" value="BIFUNCTIONAL PROTEIN GLMU"/>
    <property type="match status" value="1"/>
</dbReference>
<dbReference type="PANTHER" id="PTHR43584">
    <property type="entry name" value="NUCLEOTIDYL TRANSFERASE"/>
    <property type="match status" value="1"/>
</dbReference>
<dbReference type="Pfam" id="PF00132">
    <property type="entry name" value="Hexapep"/>
    <property type="match status" value="2"/>
</dbReference>
<dbReference type="Pfam" id="PF12804">
    <property type="entry name" value="NTP_transf_3"/>
    <property type="match status" value="1"/>
</dbReference>
<dbReference type="SUPFAM" id="SSF53448">
    <property type="entry name" value="Nucleotide-diphospho-sugar transferases"/>
    <property type="match status" value="1"/>
</dbReference>
<dbReference type="SUPFAM" id="SSF51161">
    <property type="entry name" value="Trimeric LpxA-like enzymes"/>
    <property type="match status" value="1"/>
</dbReference>
<organism>
    <name type="scientific">Thermosynechococcus vestitus (strain NIES-2133 / IAM M-273 / BP-1)</name>
    <dbReference type="NCBI Taxonomy" id="197221"/>
    <lineage>
        <taxon>Bacteria</taxon>
        <taxon>Bacillati</taxon>
        <taxon>Cyanobacteriota</taxon>
        <taxon>Cyanophyceae</taxon>
        <taxon>Acaryochloridales</taxon>
        <taxon>Thermosynechococcaceae</taxon>
        <taxon>Thermosynechococcus</taxon>
    </lineage>
</organism>
<proteinExistence type="inferred from homology"/>
<protein>
    <recommendedName>
        <fullName evidence="1">Bifunctional protein GlmU</fullName>
    </recommendedName>
    <domain>
        <recommendedName>
            <fullName evidence="1">UDP-N-acetylglucosamine pyrophosphorylase</fullName>
            <ecNumber evidence="1">2.7.7.23</ecNumber>
        </recommendedName>
        <alternativeName>
            <fullName evidence="1">N-acetylglucosamine-1-phosphate uridyltransferase</fullName>
        </alternativeName>
    </domain>
    <domain>
        <recommendedName>
            <fullName evidence="1">Glucosamine-1-phosphate N-acetyltransferase</fullName>
            <ecNumber evidence="1">2.3.1.157</ecNumber>
        </recommendedName>
    </domain>
</protein>
<sequence length="449" mass="48572">MVIVAVLAAGRGTRMKSSLPKVLHPLGGRSLVGWVLHQVQSLQPQRQFVIIGYGGDAVRAALADQPQLEFVEQRQQLGTGHAVQQLLPYLKDYEGHLLVLNGDVPLLRGQTLAHLIEVHQNHNNAATILTAQIPNPQGYGRVICDSQNMLKQIIEDRDCTTAQKQNCRINAGVYCFHWPQLAAVLPHLQSNNDQQEYYLTDAVNALSPVMAVDVEDYEEILGVNDRVQLAAAYQVLQNRIKKAWMQAGVTLIDPASITIEDTVELAPDVVIEPQTHLRGQTRIGSGSIIGPGTLIENSVIGERVTARYAVITDSEIGEDTQVGPFAHIRQQSVVADHCRIGNFVELKKARLGSDTKASHLSYLGDATLGDRVNIGAGTITANYDGVRKHPTHIGSGTKTGANSVLVAPVTLGNNVTVAAGSTVTADVPDNALVIARCRQVVKPNWEPEA</sequence>
<name>GLMU_THEVB</name>
<reference key="1">
    <citation type="journal article" date="2002" name="DNA Res.">
        <title>Complete genome structure of the thermophilic cyanobacterium Thermosynechococcus elongatus BP-1.</title>
        <authorList>
            <person name="Nakamura Y."/>
            <person name="Kaneko T."/>
            <person name="Sato S."/>
            <person name="Ikeuchi M."/>
            <person name="Katoh H."/>
            <person name="Sasamoto S."/>
            <person name="Watanabe A."/>
            <person name="Iriguchi M."/>
            <person name="Kawashima K."/>
            <person name="Kimura T."/>
            <person name="Kishida Y."/>
            <person name="Kiyokawa C."/>
            <person name="Kohara M."/>
            <person name="Matsumoto M."/>
            <person name="Matsuno A."/>
            <person name="Nakazaki N."/>
            <person name="Shimpo S."/>
            <person name="Sugimoto M."/>
            <person name="Takeuchi C."/>
            <person name="Yamada M."/>
            <person name="Tabata S."/>
        </authorList>
    </citation>
    <scope>NUCLEOTIDE SEQUENCE [LARGE SCALE GENOMIC DNA]</scope>
    <source>
        <strain>NIES-2133 / IAM M-273 / BP-1</strain>
    </source>
</reference>
<gene>
    <name evidence="1" type="primary">glmU</name>
    <name type="ordered locus">tlr0393</name>
</gene>
<keyword id="KW-0012">Acyltransferase</keyword>
<keyword id="KW-0133">Cell shape</keyword>
<keyword id="KW-0961">Cell wall biogenesis/degradation</keyword>
<keyword id="KW-0963">Cytoplasm</keyword>
<keyword id="KW-0460">Magnesium</keyword>
<keyword id="KW-0479">Metal-binding</keyword>
<keyword id="KW-0511">Multifunctional enzyme</keyword>
<keyword id="KW-0548">Nucleotidyltransferase</keyword>
<keyword id="KW-0573">Peptidoglycan synthesis</keyword>
<keyword id="KW-1185">Reference proteome</keyword>
<keyword id="KW-0677">Repeat</keyword>
<keyword id="KW-0808">Transferase</keyword>
<evidence type="ECO:0000255" key="1">
    <source>
        <dbReference type="HAMAP-Rule" id="MF_01631"/>
    </source>
</evidence>
<evidence type="ECO:0000305" key="2"/>
<accession>Q8DLT5</accession>
<feature type="chain" id="PRO_0000233862" description="Bifunctional protein GlmU">
    <location>
        <begin position="1"/>
        <end position="449"/>
    </location>
</feature>
<feature type="region of interest" description="Pyrophosphorylase" evidence="1">
    <location>
        <begin position="1"/>
        <end position="226"/>
    </location>
</feature>
<feature type="region of interest" description="Linker" evidence="1">
    <location>
        <begin position="227"/>
        <end position="247"/>
    </location>
</feature>
<feature type="region of interest" description="N-acetyltransferase" evidence="1">
    <location>
        <begin position="248"/>
        <end position="449"/>
    </location>
</feature>
<feature type="active site" description="Proton acceptor" evidence="1">
    <location>
        <position position="359"/>
    </location>
</feature>
<feature type="binding site" evidence="1">
    <location>
        <begin position="7"/>
        <end position="10"/>
    </location>
    <ligand>
        <name>UDP-N-acetyl-alpha-D-glucosamine</name>
        <dbReference type="ChEBI" id="CHEBI:57705"/>
    </ligand>
</feature>
<feature type="binding site" evidence="1">
    <location>
        <position position="21"/>
    </location>
    <ligand>
        <name>UDP-N-acetyl-alpha-D-glucosamine</name>
        <dbReference type="ChEBI" id="CHEBI:57705"/>
    </ligand>
</feature>
<feature type="binding site" evidence="1">
    <location>
        <position position="73"/>
    </location>
    <ligand>
        <name>UDP-N-acetyl-alpha-D-glucosamine</name>
        <dbReference type="ChEBI" id="CHEBI:57705"/>
    </ligand>
</feature>
<feature type="binding site" evidence="1">
    <location>
        <begin position="78"/>
        <end position="79"/>
    </location>
    <ligand>
        <name>UDP-N-acetyl-alpha-D-glucosamine</name>
        <dbReference type="ChEBI" id="CHEBI:57705"/>
    </ligand>
</feature>
<feature type="binding site" evidence="1">
    <location>
        <position position="103"/>
    </location>
    <ligand>
        <name>Mg(2+)</name>
        <dbReference type="ChEBI" id="CHEBI:18420"/>
    </ligand>
</feature>
<feature type="binding site" evidence="1">
    <location>
        <position position="140"/>
    </location>
    <ligand>
        <name>UDP-N-acetyl-alpha-D-glucosamine</name>
        <dbReference type="ChEBI" id="CHEBI:57705"/>
    </ligand>
</feature>
<feature type="binding site" evidence="1">
    <location>
        <position position="155"/>
    </location>
    <ligand>
        <name>UDP-N-acetyl-alpha-D-glucosamine</name>
        <dbReference type="ChEBI" id="CHEBI:57705"/>
    </ligand>
</feature>
<feature type="binding site" evidence="1">
    <location>
        <position position="170"/>
    </location>
    <ligand>
        <name>UDP-N-acetyl-alpha-D-glucosamine</name>
        <dbReference type="ChEBI" id="CHEBI:57705"/>
    </ligand>
</feature>
<feature type="binding site" evidence="1">
    <location>
        <position position="224"/>
    </location>
    <ligand>
        <name>Mg(2+)</name>
        <dbReference type="ChEBI" id="CHEBI:18420"/>
    </ligand>
</feature>
<feature type="binding site" evidence="1">
    <location>
        <position position="224"/>
    </location>
    <ligand>
        <name>UDP-N-acetyl-alpha-D-glucosamine</name>
        <dbReference type="ChEBI" id="CHEBI:57705"/>
    </ligand>
</feature>
<feature type="binding site" evidence="1">
    <location>
        <position position="329"/>
    </location>
    <ligand>
        <name>UDP-N-acetyl-alpha-D-glucosamine</name>
        <dbReference type="ChEBI" id="CHEBI:57705"/>
    </ligand>
</feature>
<feature type="binding site" evidence="1">
    <location>
        <position position="347"/>
    </location>
    <ligand>
        <name>UDP-N-acetyl-alpha-D-glucosamine</name>
        <dbReference type="ChEBI" id="CHEBI:57705"/>
    </ligand>
</feature>
<feature type="binding site" evidence="1">
    <location>
        <position position="362"/>
    </location>
    <ligand>
        <name>UDP-N-acetyl-alpha-D-glucosamine</name>
        <dbReference type="ChEBI" id="CHEBI:57705"/>
    </ligand>
</feature>
<feature type="binding site" evidence="1">
    <location>
        <position position="373"/>
    </location>
    <ligand>
        <name>UDP-N-acetyl-alpha-D-glucosamine</name>
        <dbReference type="ChEBI" id="CHEBI:57705"/>
    </ligand>
</feature>
<feature type="binding site" evidence="1">
    <location>
        <position position="376"/>
    </location>
    <ligand>
        <name>acetyl-CoA</name>
        <dbReference type="ChEBI" id="CHEBI:57288"/>
    </ligand>
</feature>
<feature type="binding site" evidence="1">
    <location>
        <begin position="382"/>
        <end position="383"/>
    </location>
    <ligand>
        <name>acetyl-CoA</name>
        <dbReference type="ChEBI" id="CHEBI:57288"/>
    </ligand>
</feature>
<feature type="binding site" evidence="1">
    <location>
        <position position="419"/>
    </location>
    <ligand>
        <name>acetyl-CoA</name>
        <dbReference type="ChEBI" id="CHEBI:57288"/>
    </ligand>
</feature>
<feature type="binding site" evidence="1">
    <location>
        <position position="436"/>
    </location>
    <ligand>
        <name>acetyl-CoA</name>
        <dbReference type="ChEBI" id="CHEBI:57288"/>
    </ligand>
</feature>